<accession>O13945</accession>
<name>PPK9_SCHPO</name>
<comment type="subcellular location">
    <subcellularLocation>
        <location evidence="4">Cytoplasm</location>
    </subcellularLocation>
    <subcellularLocation>
        <location evidence="4">Nucleus</location>
    </subcellularLocation>
    <subcellularLocation>
        <location evidence="4">Cytoplasm</location>
        <location evidence="4">Cytoskeleton</location>
        <location evidence="4">Microtubule organizing center</location>
        <location evidence="4">Spindle pole body</location>
    </subcellularLocation>
</comment>
<comment type="domain">
    <text>The protein kinase domain is predicted to be catalytically inactive.</text>
</comment>
<reference key="1">
    <citation type="journal article" date="2002" name="Nature">
        <title>The genome sequence of Schizosaccharomyces pombe.</title>
        <authorList>
            <person name="Wood V."/>
            <person name="Gwilliam R."/>
            <person name="Rajandream M.A."/>
            <person name="Lyne M.H."/>
            <person name="Lyne R."/>
            <person name="Stewart A."/>
            <person name="Sgouros J.G."/>
            <person name="Peat N."/>
            <person name="Hayles J."/>
            <person name="Baker S.G."/>
            <person name="Basham D."/>
            <person name="Bowman S."/>
            <person name="Brooks K."/>
            <person name="Brown D."/>
            <person name="Brown S."/>
            <person name="Chillingworth T."/>
            <person name="Churcher C.M."/>
            <person name="Collins M."/>
            <person name="Connor R."/>
            <person name="Cronin A."/>
            <person name="Davis P."/>
            <person name="Feltwell T."/>
            <person name="Fraser A."/>
            <person name="Gentles S."/>
            <person name="Goble A."/>
            <person name="Hamlin N."/>
            <person name="Harris D.E."/>
            <person name="Hidalgo J."/>
            <person name="Hodgson G."/>
            <person name="Holroyd S."/>
            <person name="Hornsby T."/>
            <person name="Howarth S."/>
            <person name="Huckle E.J."/>
            <person name="Hunt S."/>
            <person name="Jagels K."/>
            <person name="James K.D."/>
            <person name="Jones L."/>
            <person name="Jones M."/>
            <person name="Leather S."/>
            <person name="McDonald S."/>
            <person name="McLean J."/>
            <person name="Mooney P."/>
            <person name="Moule S."/>
            <person name="Mungall K.L."/>
            <person name="Murphy L.D."/>
            <person name="Niblett D."/>
            <person name="Odell C."/>
            <person name="Oliver K."/>
            <person name="O'Neil S."/>
            <person name="Pearson D."/>
            <person name="Quail M.A."/>
            <person name="Rabbinowitsch E."/>
            <person name="Rutherford K.M."/>
            <person name="Rutter S."/>
            <person name="Saunders D."/>
            <person name="Seeger K."/>
            <person name="Sharp S."/>
            <person name="Skelton J."/>
            <person name="Simmonds M.N."/>
            <person name="Squares R."/>
            <person name="Squares S."/>
            <person name="Stevens K."/>
            <person name="Taylor K."/>
            <person name="Taylor R.G."/>
            <person name="Tivey A."/>
            <person name="Walsh S.V."/>
            <person name="Warren T."/>
            <person name="Whitehead S."/>
            <person name="Woodward J.R."/>
            <person name="Volckaert G."/>
            <person name="Aert R."/>
            <person name="Robben J."/>
            <person name="Grymonprez B."/>
            <person name="Weltjens I."/>
            <person name="Vanstreels E."/>
            <person name="Rieger M."/>
            <person name="Schaefer M."/>
            <person name="Mueller-Auer S."/>
            <person name="Gabel C."/>
            <person name="Fuchs M."/>
            <person name="Duesterhoeft A."/>
            <person name="Fritzc C."/>
            <person name="Holzer E."/>
            <person name="Moestl D."/>
            <person name="Hilbert H."/>
            <person name="Borzym K."/>
            <person name="Langer I."/>
            <person name="Beck A."/>
            <person name="Lehrach H."/>
            <person name="Reinhardt R."/>
            <person name="Pohl T.M."/>
            <person name="Eger P."/>
            <person name="Zimmermann W."/>
            <person name="Wedler H."/>
            <person name="Wambutt R."/>
            <person name="Purnelle B."/>
            <person name="Goffeau A."/>
            <person name="Cadieu E."/>
            <person name="Dreano S."/>
            <person name="Gloux S."/>
            <person name="Lelaure V."/>
            <person name="Mottier S."/>
            <person name="Galibert F."/>
            <person name="Aves S.J."/>
            <person name="Xiang Z."/>
            <person name="Hunt C."/>
            <person name="Moore K."/>
            <person name="Hurst S.M."/>
            <person name="Lucas M."/>
            <person name="Rochet M."/>
            <person name="Gaillardin C."/>
            <person name="Tallada V.A."/>
            <person name="Garzon A."/>
            <person name="Thode G."/>
            <person name="Daga R.R."/>
            <person name="Cruzado L."/>
            <person name="Jimenez J."/>
            <person name="Sanchez M."/>
            <person name="del Rey F."/>
            <person name="Benito J."/>
            <person name="Dominguez A."/>
            <person name="Revuelta J.L."/>
            <person name="Moreno S."/>
            <person name="Armstrong J."/>
            <person name="Forsburg S.L."/>
            <person name="Cerutti L."/>
            <person name="Lowe T."/>
            <person name="McCombie W.R."/>
            <person name="Paulsen I."/>
            <person name="Potashkin J."/>
            <person name="Shpakovski G.V."/>
            <person name="Ussery D."/>
            <person name="Barrell B.G."/>
            <person name="Nurse P."/>
        </authorList>
    </citation>
    <scope>NUCLEOTIDE SEQUENCE [LARGE SCALE GENOMIC DNA]</scope>
    <source>
        <strain>972 / ATCC 24843</strain>
    </source>
</reference>
<reference key="2">
    <citation type="journal article" date="2005" name="Eukaryot. Cell">
        <title>Systematic deletion analysis of fission yeast protein kinases.</title>
        <authorList>
            <person name="Bimbo A."/>
            <person name="Jia Y."/>
            <person name="Poh S.L."/>
            <person name="Karuturi R.K.M."/>
            <person name="den Elzen N."/>
            <person name="Peng X."/>
            <person name="Zheng L."/>
            <person name="O'Connell M."/>
            <person name="Liu E.T."/>
            <person name="Balasubramanian M.K."/>
            <person name="Liu J."/>
        </authorList>
    </citation>
    <scope>IDENTIFICATION</scope>
</reference>
<reference key="3">
    <citation type="journal article" date="2006" name="Nat. Biotechnol.">
        <title>ORFeome cloning and global analysis of protein localization in the fission yeast Schizosaccharomyces pombe.</title>
        <authorList>
            <person name="Matsuyama A."/>
            <person name="Arai R."/>
            <person name="Yashiroda Y."/>
            <person name="Shirai A."/>
            <person name="Kamata A."/>
            <person name="Sekido S."/>
            <person name="Kobayashi Y."/>
            <person name="Hashimoto A."/>
            <person name="Hamamoto M."/>
            <person name="Hiraoka Y."/>
            <person name="Horinouchi S."/>
            <person name="Yoshida M."/>
        </authorList>
    </citation>
    <scope>SUBCELLULAR LOCATION [LARGE SCALE ANALYSIS]</scope>
</reference>
<gene>
    <name type="primary">ppk9</name>
    <name type="ORF">SPAC23H4.02</name>
</gene>
<proteinExistence type="predicted"/>
<keyword id="KW-0067">ATP-binding</keyword>
<keyword id="KW-0963">Cytoplasm</keyword>
<keyword id="KW-0206">Cytoskeleton</keyword>
<keyword id="KW-0547">Nucleotide-binding</keyword>
<keyword id="KW-0539">Nucleus</keyword>
<keyword id="KW-1185">Reference proteome</keyword>
<organism>
    <name type="scientific">Schizosaccharomyces pombe (strain 972 / ATCC 24843)</name>
    <name type="common">Fission yeast</name>
    <dbReference type="NCBI Taxonomy" id="284812"/>
    <lineage>
        <taxon>Eukaryota</taxon>
        <taxon>Fungi</taxon>
        <taxon>Dikarya</taxon>
        <taxon>Ascomycota</taxon>
        <taxon>Taphrinomycotina</taxon>
        <taxon>Schizosaccharomycetes</taxon>
        <taxon>Schizosaccharomycetales</taxon>
        <taxon>Schizosaccharomycetaceae</taxon>
        <taxon>Schizosaccharomyces</taxon>
    </lineage>
</organism>
<sequence>MQTPSSASAESEKDSGNTYVGPWLLGRTLGQGNLAKVKLGKHFQTNEKVALKMVYNDELEDKDTWKRLQREVTILRQLHHPNIITLYQVFRVPKYTVLALEYMDTDLHSMVVKHNRLDECTTRKIFRQIVHAIDYCHLHRVAHRDLKLENILLNKDLVVKLTDFGLSNFMLDGSFLSTSCGTPHYAAPEVIQGRYYDGCDVDVWGCGILLYLMLVGEFPFEDVTISNVLSRVCKGIYTIPSFVSSSASDLIRQMLMVLPTSRIKVAEIMQHPWFIADLPTHSRLPSRTSSFSSKHRSVTFSPPDLAILFDPSITSPSSSVGQIPQPTDHSALSPSKPMSISGTESPNPDPASLCYSSYEDLYSATSWHSDMAESSGFLDPTDIPPIPSNVETLRSSLPQRHASFMNKVYNHPLSRPPAPNRLRSLRWHYGIQTAKNPIEVLRKLCEALLELGARFRPCDEESFLKENKYKVFSCITCHNSPVYLVIELFSIGPSASVIDIRFSSSDDSIKYTSSYSPMPFLEVVKQLILKIA</sequence>
<feature type="chain" id="PRO_0000256816" description="Protein kinase domain-containing protein ppk9">
    <location>
        <begin position="1"/>
        <end position="532"/>
    </location>
</feature>
<feature type="domain" description="Protein kinase" evidence="1">
    <location>
        <begin position="23"/>
        <end position="274"/>
    </location>
</feature>
<feature type="region of interest" description="Disordered" evidence="3">
    <location>
        <begin position="316"/>
        <end position="349"/>
    </location>
</feature>
<feature type="compositionally biased region" description="Polar residues" evidence="3">
    <location>
        <begin position="316"/>
        <end position="346"/>
    </location>
</feature>
<feature type="active site" description="Proton acceptor" evidence="1 2">
    <location>
        <position position="145"/>
    </location>
</feature>
<feature type="binding site" evidence="1">
    <location>
        <begin position="29"/>
        <end position="37"/>
    </location>
    <ligand>
        <name>ATP</name>
        <dbReference type="ChEBI" id="CHEBI:30616"/>
    </ligand>
</feature>
<feature type="binding site" evidence="1">
    <location>
        <position position="52"/>
    </location>
    <ligand>
        <name>ATP</name>
        <dbReference type="ChEBI" id="CHEBI:30616"/>
    </ligand>
</feature>
<protein>
    <recommendedName>
        <fullName>Protein kinase domain-containing protein ppk9</fullName>
    </recommendedName>
</protein>
<dbReference type="EMBL" id="CU329670">
    <property type="protein sequence ID" value="CAB11657.1"/>
    <property type="molecule type" value="Genomic_DNA"/>
</dbReference>
<dbReference type="PIR" id="T38326">
    <property type="entry name" value="T38326"/>
</dbReference>
<dbReference type="RefSeq" id="NP_593404.1">
    <property type="nucleotide sequence ID" value="NM_001018836.2"/>
</dbReference>
<dbReference type="SMR" id="O13945"/>
<dbReference type="BioGRID" id="278267">
    <property type="interactions" value="30"/>
</dbReference>
<dbReference type="FunCoup" id="O13945">
    <property type="interactions" value="280"/>
</dbReference>
<dbReference type="STRING" id="284812.O13945"/>
<dbReference type="iPTMnet" id="O13945"/>
<dbReference type="PaxDb" id="4896-SPAC23H4.02.1"/>
<dbReference type="EnsemblFungi" id="SPAC23H4.02.1">
    <property type="protein sequence ID" value="SPAC23H4.02.1:pep"/>
    <property type="gene ID" value="SPAC23H4.02"/>
</dbReference>
<dbReference type="GeneID" id="2541773"/>
<dbReference type="KEGG" id="spo:2541773"/>
<dbReference type="PomBase" id="SPAC23H4.02">
    <property type="gene designation" value="ppk9"/>
</dbReference>
<dbReference type="VEuPathDB" id="FungiDB:SPAC23H4.02"/>
<dbReference type="eggNOG" id="KOG0583">
    <property type="taxonomic scope" value="Eukaryota"/>
</dbReference>
<dbReference type="HOGENOM" id="CLU_000288_59_3_1"/>
<dbReference type="InParanoid" id="O13945"/>
<dbReference type="OMA" id="IQGRYYD"/>
<dbReference type="PhylomeDB" id="O13945"/>
<dbReference type="Reactome" id="R-SPO-1632852">
    <property type="pathway name" value="Macroautophagy"/>
</dbReference>
<dbReference type="Reactome" id="R-SPO-380972">
    <property type="pathway name" value="Energy dependent regulation of mTOR by LKB1-AMPK"/>
</dbReference>
<dbReference type="Reactome" id="R-SPO-5628897">
    <property type="pathway name" value="TP53 Regulates Metabolic Genes"/>
</dbReference>
<dbReference type="PRO" id="PR:O13945"/>
<dbReference type="Proteomes" id="UP000002485">
    <property type="component" value="Chromosome I"/>
</dbReference>
<dbReference type="GO" id="GO:0005737">
    <property type="term" value="C:cytoplasm"/>
    <property type="evidence" value="ECO:0000314"/>
    <property type="project" value="PomBase"/>
</dbReference>
<dbReference type="GO" id="GO:0005829">
    <property type="term" value="C:cytosol"/>
    <property type="evidence" value="ECO:0007005"/>
    <property type="project" value="PomBase"/>
</dbReference>
<dbReference type="GO" id="GO:0044732">
    <property type="term" value="C:mitotic spindle pole body"/>
    <property type="evidence" value="ECO:0007005"/>
    <property type="project" value="PomBase"/>
</dbReference>
<dbReference type="GO" id="GO:0005634">
    <property type="term" value="C:nucleus"/>
    <property type="evidence" value="ECO:0000314"/>
    <property type="project" value="PomBase"/>
</dbReference>
<dbReference type="GO" id="GO:0005524">
    <property type="term" value="F:ATP binding"/>
    <property type="evidence" value="ECO:0000255"/>
    <property type="project" value="PomBase"/>
</dbReference>
<dbReference type="GO" id="GO:0004674">
    <property type="term" value="F:protein serine/threonine kinase activity"/>
    <property type="evidence" value="ECO:0000318"/>
    <property type="project" value="GO_Central"/>
</dbReference>
<dbReference type="CDD" id="cd14003">
    <property type="entry name" value="STKc_AMPK-like"/>
    <property type="match status" value="1"/>
</dbReference>
<dbReference type="FunFam" id="3.30.200.20:FF:000042">
    <property type="entry name" value="Aurora kinase A"/>
    <property type="match status" value="1"/>
</dbReference>
<dbReference type="FunFam" id="1.10.510.10:FF:000571">
    <property type="entry name" value="Maternal embryonic leucine zipper kinase"/>
    <property type="match status" value="1"/>
</dbReference>
<dbReference type="Gene3D" id="3.30.310.80">
    <property type="entry name" value="Kinase associated domain 1, KA1"/>
    <property type="match status" value="1"/>
</dbReference>
<dbReference type="Gene3D" id="1.10.510.10">
    <property type="entry name" value="Transferase(Phosphotransferase) domain 1"/>
    <property type="match status" value="1"/>
</dbReference>
<dbReference type="InterPro" id="IPR032270">
    <property type="entry name" value="AMPK_C"/>
</dbReference>
<dbReference type="InterPro" id="IPR028375">
    <property type="entry name" value="KA1/Ssp2_C"/>
</dbReference>
<dbReference type="InterPro" id="IPR011009">
    <property type="entry name" value="Kinase-like_dom_sf"/>
</dbReference>
<dbReference type="InterPro" id="IPR000719">
    <property type="entry name" value="Prot_kinase_dom"/>
</dbReference>
<dbReference type="InterPro" id="IPR008271">
    <property type="entry name" value="Ser/Thr_kinase_AS"/>
</dbReference>
<dbReference type="PANTHER" id="PTHR24346">
    <property type="entry name" value="MAP/MICROTUBULE AFFINITY-REGULATING KINASE"/>
    <property type="match status" value="1"/>
</dbReference>
<dbReference type="PANTHER" id="PTHR24346:SF110">
    <property type="entry name" value="NON-SPECIFIC SERINE_THREONINE PROTEIN KINASE"/>
    <property type="match status" value="1"/>
</dbReference>
<dbReference type="Pfam" id="PF16579">
    <property type="entry name" value="AdenylateSensor"/>
    <property type="match status" value="1"/>
</dbReference>
<dbReference type="Pfam" id="PF00069">
    <property type="entry name" value="Pkinase"/>
    <property type="match status" value="1"/>
</dbReference>
<dbReference type="SMART" id="SM00220">
    <property type="entry name" value="S_TKc"/>
    <property type="match status" value="1"/>
</dbReference>
<dbReference type="SUPFAM" id="SSF103243">
    <property type="entry name" value="KA1-like"/>
    <property type="match status" value="1"/>
</dbReference>
<dbReference type="SUPFAM" id="SSF56112">
    <property type="entry name" value="Protein kinase-like (PK-like)"/>
    <property type="match status" value="1"/>
</dbReference>
<dbReference type="PROSITE" id="PS50011">
    <property type="entry name" value="PROTEIN_KINASE_DOM"/>
    <property type="match status" value="1"/>
</dbReference>
<dbReference type="PROSITE" id="PS00108">
    <property type="entry name" value="PROTEIN_KINASE_ST"/>
    <property type="match status" value="1"/>
</dbReference>
<evidence type="ECO:0000255" key="1">
    <source>
        <dbReference type="PROSITE-ProRule" id="PRU00159"/>
    </source>
</evidence>
<evidence type="ECO:0000255" key="2">
    <source>
        <dbReference type="PROSITE-ProRule" id="PRU10027"/>
    </source>
</evidence>
<evidence type="ECO:0000256" key="3">
    <source>
        <dbReference type="SAM" id="MobiDB-lite"/>
    </source>
</evidence>
<evidence type="ECO:0000269" key="4">
    <source>
    </source>
</evidence>